<accession>Q0TIB5</accession>
<reference key="1">
    <citation type="journal article" date="2006" name="Mol. Microbiol.">
        <title>Role of pathogenicity island-associated integrases in the genome plasticity of uropathogenic Escherichia coli strain 536.</title>
        <authorList>
            <person name="Hochhut B."/>
            <person name="Wilde C."/>
            <person name="Balling G."/>
            <person name="Middendorf B."/>
            <person name="Dobrindt U."/>
            <person name="Brzuszkiewicz E."/>
            <person name="Gottschalk G."/>
            <person name="Carniel E."/>
            <person name="Hacker J."/>
        </authorList>
    </citation>
    <scope>NUCLEOTIDE SEQUENCE [LARGE SCALE GENOMIC DNA]</scope>
    <source>
        <strain>536 / UPEC</strain>
    </source>
</reference>
<gene>
    <name evidence="1" type="primary">yciC</name>
    <name type="ordered locus">ECP_1303</name>
</gene>
<feature type="chain" id="PRO_1000064523" description="UPF0259 membrane protein YciC">
    <location>
        <begin position="1"/>
        <end position="247"/>
    </location>
</feature>
<feature type="transmembrane region" description="Helical" evidence="1">
    <location>
        <begin position="20"/>
        <end position="40"/>
    </location>
</feature>
<feature type="transmembrane region" description="Helical" evidence="1">
    <location>
        <begin position="87"/>
        <end position="107"/>
    </location>
</feature>
<feature type="transmembrane region" description="Helical" evidence="1">
    <location>
        <begin position="118"/>
        <end position="140"/>
    </location>
</feature>
<feature type="transmembrane region" description="Helical" evidence="1">
    <location>
        <begin position="152"/>
        <end position="172"/>
    </location>
</feature>
<feature type="transmembrane region" description="Helical" evidence="1">
    <location>
        <begin position="187"/>
        <end position="209"/>
    </location>
</feature>
<feature type="transmembrane region" description="Helical" evidence="1">
    <location>
        <begin position="225"/>
        <end position="245"/>
    </location>
</feature>
<name>YCIC_ECOL5</name>
<organism>
    <name type="scientific">Escherichia coli O6:K15:H31 (strain 536 / UPEC)</name>
    <dbReference type="NCBI Taxonomy" id="362663"/>
    <lineage>
        <taxon>Bacteria</taxon>
        <taxon>Pseudomonadati</taxon>
        <taxon>Pseudomonadota</taxon>
        <taxon>Gammaproteobacteria</taxon>
        <taxon>Enterobacterales</taxon>
        <taxon>Enterobacteriaceae</taxon>
        <taxon>Escherichia</taxon>
    </lineage>
</organism>
<keyword id="KW-0997">Cell inner membrane</keyword>
<keyword id="KW-1003">Cell membrane</keyword>
<keyword id="KW-0472">Membrane</keyword>
<keyword id="KW-0812">Transmembrane</keyword>
<keyword id="KW-1133">Transmembrane helix</keyword>
<proteinExistence type="inferred from homology"/>
<comment type="subcellular location">
    <subcellularLocation>
        <location evidence="1">Cell inner membrane</location>
        <topology evidence="1">Multi-pass membrane protein</topology>
    </subcellularLocation>
</comment>
<comment type="similarity">
    <text evidence="1">Belongs to the UPF0259 family.</text>
</comment>
<dbReference type="EMBL" id="CP000247">
    <property type="protein sequence ID" value="ABG69314.1"/>
    <property type="molecule type" value="Genomic_DNA"/>
</dbReference>
<dbReference type="RefSeq" id="WP_000028546.1">
    <property type="nucleotide sequence ID" value="NC_008253.1"/>
</dbReference>
<dbReference type="KEGG" id="ecp:ECP_1303"/>
<dbReference type="HOGENOM" id="CLU_073287_0_0_6"/>
<dbReference type="Proteomes" id="UP000009182">
    <property type="component" value="Chromosome"/>
</dbReference>
<dbReference type="GO" id="GO:0005886">
    <property type="term" value="C:plasma membrane"/>
    <property type="evidence" value="ECO:0007669"/>
    <property type="project" value="UniProtKB-SubCell"/>
</dbReference>
<dbReference type="HAMAP" id="MF_01067">
    <property type="entry name" value="UPF0259"/>
    <property type="match status" value="1"/>
</dbReference>
<dbReference type="InterPro" id="IPR009627">
    <property type="entry name" value="UPF0259"/>
</dbReference>
<dbReference type="NCBIfam" id="NF002774">
    <property type="entry name" value="PRK02868.1"/>
    <property type="match status" value="1"/>
</dbReference>
<dbReference type="Pfam" id="PF06790">
    <property type="entry name" value="UPF0259"/>
    <property type="match status" value="1"/>
</dbReference>
<protein>
    <recommendedName>
        <fullName evidence="1">UPF0259 membrane protein YciC</fullName>
    </recommendedName>
</protein>
<evidence type="ECO:0000255" key="1">
    <source>
        <dbReference type="HAMAP-Rule" id="MF_01067"/>
    </source>
</evidence>
<sequence>MSITAQSVYRDTGNFFRNQFMTILLVSLLCAFITVVLGHVFSPSDAQLAQLNDGVPVSGSSGLFDLVQNMSPEQQQILLQASAASTFSGLIGNAILAGGVILIIQLVSAGQRVSALRAIGASAPILPKLFILIFLTTLLVQIGIMLVVVPGIIMAILLALAPVMLVQDKMGVFASMRSSMRLTWANMRLVAPAVLSWLLAKTLLLLFASSFAALTPEIGAVLANTLSNLISAVLLIYLFRLYMLIRQ</sequence>